<sequence>MALSHSVKERTISENSLIILLQGLQGQITTVDLRDESVARGRIDNVDAFMNIRLANVTYTDRWGHQVELDDLFVTGRNVRYVHIPDGVDITATIEQQLQIIHRVRNFGGKGQGRREFPSKRP</sequence>
<reference key="1">
    <citation type="journal article" date="2004" name="Genome Res.">
        <title>The status, quality, and expansion of the NIH full-length cDNA project: the Mammalian Gene Collection (MGC).</title>
        <authorList>
            <consortium name="The MGC Project Team"/>
        </authorList>
    </citation>
    <scope>NUCLEOTIDE SEQUENCE [LARGE SCALE MRNA]</scope>
    <source>
        <strain>FVB/N</strain>
        <tissue>Colon</tissue>
        <tissue>Mammary tumor</tissue>
    </source>
</reference>
<reference key="2">
    <citation type="journal article" date="2009" name="Mol. Cell. Biol.">
        <title>Three proteins of the U7-specific Sm ring function as the molecular ruler to determine the site of 3'-end processing in mammalian histone pre-mRNA.</title>
        <authorList>
            <person name="Yang X.-C."/>
            <person name="Torres M.P."/>
            <person name="Marzluff W.F."/>
            <person name="Dominski Z."/>
        </authorList>
    </citation>
    <scope>RNA-BINDING</scope>
</reference>
<protein>
    <recommendedName>
        <fullName>U7 snRNA-associated Sm-like protein LSm10</fullName>
    </recommendedName>
</protein>
<evidence type="ECO:0000250" key="1"/>
<evidence type="ECO:0000255" key="2">
    <source>
        <dbReference type="PROSITE-ProRule" id="PRU01346"/>
    </source>
</evidence>
<evidence type="ECO:0000305" key="3"/>
<organism>
    <name type="scientific">Mus musculus</name>
    <name type="common">Mouse</name>
    <dbReference type="NCBI Taxonomy" id="10090"/>
    <lineage>
        <taxon>Eukaryota</taxon>
        <taxon>Metazoa</taxon>
        <taxon>Chordata</taxon>
        <taxon>Craniata</taxon>
        <taxon>Vertebrata</taxon>
        <taxon>Euteleostomi</taxon>
        <taxon>Mammalia</taxon>
        <taxon>Eutheria</taxon>
        <taxon>Euarchontoglires</taxon>
        <taxon>Glires</taxon>
        <taxon>Rodentia</taxon>
        <taxon>Myomorpha</taxon>
        <taxon>Muroidea</taxon>
        <taxon>Muridae</taxon>
        <taxon>Murinae</taxon>
        <taxon>Mus</taxon>
        <taxon>Mus</taxon>
    </lineage>
</organism>
<gene>
    <name type="primary">Lsm10</name>
</gene>
<keyword id="KW-0507">mRNA processing</keyword>
<keyword id="KW-0508">mRNA splicing</keyword>
<keyword id="KW-0539">Nucleus</keyword>
<keyword id="KW-1185">Reference proteome</keyword>
<keyword id="KW-0687">Ribonucleoprotein</keyword>
<keyword id="KW-0694">RNA-binding</keyword>
<proteinExistence type="evidence at protein level"/>
<dbReference type="EMBL" id="BC024543">
    <property type="protein sequence ID" value="AAH24543.1"/>
    <property type="molecule type" value="mRNA"/>
</dbReference>
<dbReference type="EMBL" id="BC026476">
    <property type="protein sequence ID" value="AAH26476.1"/>
    <property type="molecule type" value="mRNA"/>
</dbReference>
<dbReference type="CCDS" id="CCDS18642.1"/>
<dbReference type="RefSeq" id="NP_001156738.1">
    <property type="nucleotide sequence ID" value="NM_001163266.2"/>
</dbReference>
<dbReference type="RefSeq" id="NP_001413061.1">
    <property type="nucleotide sequence ID" value="NM_001426132.1"/>
</dbReference>
<dbReference type="RefSeq" id="NP_001413062.1">
    <property type="nucleotide sequence ID" value="NM_001426133.1"/>
</dbReference>
<dbReference type="RefSeq" id="NP_620046.1">
    <property type="nucleotide sequence ID" value="NM_138721.3"/>
</dbReference>
<dbReference type="RefSeq" id="XP_006502749.1">
    <property type="nucleotide sequence ID" value="XM_006502686.2"/>
</dbReference>
<dbReference type="RefSeq" id="XP_006502750.1">
    <property type="nucleotide sequence ID" value="XM_006502687.2"/>
</dbReference>
<dbReference type="SMR" id="Q8QZX5"/>
<dbReference type="CORUM" id="Q8QZX5"/>
<dbReference type="FunCoup" id="Q8QZX5">
    <property type="interactions" value="1085"/>
</dbReference>
<dbReference type="STRING" id="10090.ENSMUSP00000061913"/>
<dbReference type="iPTMnet" id="Q8QZX5"/>
<dbReference type="PhosphoSitePlus" id="Q8QZX5"/>
<dbReference type="PaxDb" id="10090-ENSMUSP00000061913"/>
<dbReference type="ProteomicsDB" id="290178"/>
<dbReference type="Pumba" id="Q8QZX5"/>
<dbReference type="Antibodypedia" id="17475">
    <property type="antibodies" value="67 antibodies from 17 providers"/>
</dbReference>
<dbReference type="DNASU" id="116748"/>
<dbReference type="Ensembl" id="ENSMUST00000055575.8">
    <property type="protein sequence ID" value="ENSMUSP00000061913.8"/>
    <property type="gene ID" value="ENSMUSG00000050188.9"/>
</dbReference>
<dbReference type="Ensembl" id="ENSMUST00000179323.2">
    <property type="protein sequence ID" value="ENSMUSP00000136585.2"/>
    <property type="gene ID" value="ENSMUSG00000050188.9"/>
</dbReference>
<dbReference type="GeneID" id="116748"/>
<dbReference type="KEGG" id="mmu:116748"/>
<dbReference type="UCSC" id="uc008usk.2">
    <property type="organism name" value="mouse"/>
</dbReference>
<dbReference type="AGR" id="MGI:2151045"/>
<dbReference type="CTD" id="84967"/>
<dbReference type="MGI" id="MGI:2151045">
    <property type="gene designation" value="Lsm10"/>
</dbReference>
<dbReference type="VEuPathDB" id="HostDB:ENSMUSG00000050188"/>
<dbReference type="eggNOG" id="KOG3428">
    <property type="taxonomic scope" value="Eukaryota"/>
</dbReference>
<dbReference type="GeneTree" id="ENSGT00510000048364"/>
<dbReference type="InParanoid" id="Q8QZX5"/>
<dbReference type="OMA" id="IADGHMT"/>
<dbReference type="OrthoDB" id="10256176at2759"/>
<dbReference type="PhylomeDB" id="Q8QZX5"/>
<dbReference type="TreeFam" id="TF332356"/>
<dbReference type="Reactome" id="R-MMU-111367">
    <property type="pathway name" value="SLBP independent Processing of Histone Pre-mRNAs"/>
</dbReference>
<dbReference type="Reactome" id="R-MMU-73856">
    <property type="pathway name" value="RNA Polymerase II Transcription Termination"/>
</dbReference>
<dbReference type="Reactome" id="R-MMU-77588">
    <property type="pathway name" value="SLBP Dependent Processing of Replication-Dependent Histone Pre-mRNAs"/>
</dbReference>
<dbReference type="BioGRID-ORCS" id="116748">
    <property type="hits" value="30 hits in 80 CRISPR screens"/>
</dbReference>
<dbReference type="PRO" id="PR:Q8QZX5"/>
<dbReference type="Proteomes" id="UP000000589">
    <property type="component" value="Chromosome 4"/>
</dbReference>
<dbReference type="RNAct" id="Q8QZX5">
    <property type="molecule type" value="protein"/>
</dbReference>
<dbReference type="Bgee" id="ENSMUSG00000050188">
    <property type="expression patterns" value="Expressed in interventricular septum and 223 other cell types or tissues"/>
</dbReference>
<dbReference type="ExpressionAtlas" id="Q8QZX5">
    <property type="expression patterns" value="baseline and differential"/>
</dbReference>
<dbReference type="GO" id="GO:0015030">
    <property type="term" value="C:Cajal body"/>
    <property type="evidence" value="ECO:0000250"/>
    <property type="project" value="UniProtKB"/>
</dbReference>
<dbReference type="GO" id="GO:0005683">
    <property type="term" value="C:U7 snRNP"/>
    <property type="evidence" value="ECO:0000250"/>
    <property type="project" value="UniProtKB"/>
</dbReference>
<dbReference type="GO" id="GO:0071208">
    <property type="term" value="F:histone pre-mRNA DCP binding"/>
    <property type="evidence" value="ECO:0000314"/>
    <property type="project" value="UniProtKB"/>
</dbReference>
<dbReference type="GO" id="GO:0017069">
    <property type="term" value="F:snRNA binding"/>
    <property type="evidence" value="ECO:0000266"/>
    <property type="project" value="MGI"/>
</dbReference>
<dbReference type="GO" id="GO:0071209">
    <property type="term" value="F:U7 snRNA binding"/>
    <property type="evidence" value="ECO:0007669"/>
    <property type="project" value="Ensembl"/>
</dbReference>
<dbReference type="GO" id="GO:0006397">
    <property type="term" value="P:mRNA processing"/>
    <property type="evidence" value="ECO:0007669"/>
    <property type="project" value="UniProtKB-KW"/>
</dbReference>
<dbReference type="GO" id="GO:1900087">
    <property type="term" value="P:positive regulation of G1/S transition of mitotic cell cycle"/>
    <property type="evidence" value="ECO:0000250"/>
    <property type="project" value="UniProtKB"/>
</dbReference>
<dbReference type="GO" id="GO:0008380">
    <property type="term" value="P:RNA splicing"/>
    <property type="evidence" value="ECO:0007669"/>
    <property type="project" value="UniProtKB-KW"/>
</dbReference>
<dbReference type="CDD" id="cd01733">
    <property type="entry name" value="LSm10"/>
    <property type="match status" value="1"/>
</dbReference>
<dbReference type="FunFam" id="2.30.30.100:FF:000039">
    <property type="entry name" value="U7 snRNA-associated Sm-like protein LSm10"/>
    <property type="match status" value="1"/>
</dbReference>
<dbReference type="Gene3D" id="2.30.30.100">
    <property type="match status" value="1"/>
</dbReference>
<dbReference type="InterPro" id="IPR010920">
    <property type="entry name" value="LSM_dom_sf"/>
</dbReference>
<dbReference type="InterPro" id="IPR047575">
    <property type="entry name" value="Sm"/>
</dbReference>
<dbReference type="InterPro" id="IPR001163">
    <property type="entry name" value="Sm_dom_euk/arc"/>
</dbReference>
<dbReference type="InterPro" id="IPR052840">
    <property type="entry name" value="U7_snRNA_Sm-like"/>
</dbReference>
<dbReference type="PANTHER" id="PTHR21196">
    <property type="entry name" value="U7 SNRNA-ASSOCIATED SM-LIKE PROTEIN LSM10"/>
    <property type="match status" value="1"/>
</dbReference>
<dbReference type="PANTHER" id="PTHR21196:SF1">
    <property type="entry name" value="U7 SNRNA-ASSOCIATED SM-LIKE PROTEIN LSM10"/>
    <property type="match status" value="1"/>
</dbReference>
<dbReference type="Pfam" id="PF01423">
    <property type="entry name" value="LSM"/>
    <property type="match status" value="1"/>
</dbReference>
<dbReference type="SMART" id="SM00651">
    <property type="entry name" value="Sm"/>
    <property type="match status" value="1"/>
</dbReference>
<dbReference type="SUPFAM" id="SSF50182">
    <property type="entry name" value="Sm-like ribonucleoproteins"/>
    <property type="match status" value="1"/>
</dbReference>
<dbReference type="PROSITE" id="PS52002">
    <property type="entry name" value="SM"/>
    <property type="match status" value="1"/>
</dbReference>
<comment type="function">
    <text evidence="1">Appears to function in the U7 snRNP complex that is involved in histone 3'-end processing (By similarity). Increases U7 snRNA levels but not histone 3'-end pre-mRNA processing activity, when overexpressed (By similarity). Required for cell cycle progression from G1 to S phases (By similarity). Binds specifically to U7 snRNA (By similarity). Binds to the downstream cleavage product (DCP) of histone pre-mRNA.</text>
</comment>
<comment type="subunit">
    <text evidence="1">Component of the heptameric ring U7 snRNP complex, or U7 Sm protein core complex, at least composed of LSM10, LSM11, SNRPB, SNRPD3, SNRPE, SNRPF, SNRPG and U7 snRNA. Formation of the U7 snRNP is an ATP-dependent process mediated by a specialized SMN complex containing at least the Sm protein core complex and additionally, the U7-specific LSM10 and LSM11 proteins. Interacts with CLNS1A and SMN (By similarity).</text>
</comment>
<comment type="subcellular location">
    <subcellularLocation>
        <location evidence="1">Nucleus</location>
    </subcellularLocation>
</comment>
<comment type="PTM">
    <text evidence="1">Not methylated. Methylation is not necessary for interaction with SMN (By similarity).</text>
</comment>
<comment type="similarity">
    <text evidence="3">Belongs to the snRNP Sm proteins family.</text>
</comment>
<name>LSM10_MOUSE</name>
<accession>Q8QZX5</accession>
<feature type="chain" id="PRO_0000125586" description="U7 snRNA-associated Sm-like protein LSm10">
    <location>
        <begin position="1"/>
        <end position="122"/>
    </location>
</feature>
<feature type="domain" description="Sm" evidence="2">
    <location>
        <begin position="16"/>
        <end position="88"/>
    </location>
</feature>